<comment type="function">
    <text evidence="1">Chaperone for NapA, the catalytic subunit of the periplasmic nitrate reductase. It binds directly and specifically to the twin-arginine signal peptide of NapA, preventing premature interaction with the Tat translocase and premature export.</text>
</comment>
<comment type="subunit">
    <text evidence="1">Interacts with the cytoplasmic NapA precursor.</text>
</comment>
<comment type="subcellular location">
    <subcellularLocation>
        <location evidence="1 2">Cytoplasm</location>
    </subcellularLocation>
</comment>
<comment type="similarity">
    <text evidence="1">Belongs to the NapD family.</text>
</comment>
<proteinExistence type="inferred from homology"/>
<evidence type="ECO:0000255" key="1">
    <source>
        <dbReference type="HAMAP-Rule" id="MF_02200"/>
    </source>
</evidence>
<evidence type="ECO:0000305" key="2"/>
<organism>
    <name type="scientific">Haemophilus influenzae (strain ATCC 51907 / DSM 11121 / KW20 / Rd)</name>
    <dbReference type="NCBI Taxonomy" id="71421"/>
    <lineage>
        <taxon>Bacteria</taxon>
        <taxon>Pseudomonadati</taxon>
        <taxon>Pseudomonadota</taxon>
        <taxon>Gammaproteobacteria</taxon>
        <taxon>Pasteurellales</taxon>
        <taxon>Pasteurellaceae</taxon>
        <taxon>Haemophilus</taxon>
    </lineage>
</organism>
<feature type="chain" id="PRO_0000096714" description="Chaperone NapD">
    <location>
        <begin position="1"/>
        <end position="93"/>
    </location>
</feature>
<name>NAPD_HAEIN</name>
<dbReference type="EMBL" id="L42023">
    <property type="protein sequence ID" value="AAC22005.1"/>
    <property type="molecule type" value="Genomic_DNA"/>
</dbReference>
<dbReference type="PIR" id="I64148">
    <property type="entry name" value="I64148"/>
</dbReference>
<dbReference type="RefSeq" id="NP_438507.1">
    <property type="nucleotide sequence ID" value="NC_000907.1"/>
</dbReference>
<dbReference type="SMR" id="P44651"/>
<dbReference type="STRING" id="71421.HI_0343"/>
<dbReference type="EnsemblBacteria" id="AAC22005">
    <property type="protein sequence ID" value="AAC22005"/>
    <property type="gene ID" value="HI_0343"/>
</dbReference>
<dbReference type="KEGG" id="hin:HI_0343"/>
<dbReference type="PATRIC" id="fig|71421.8.peg.361"/>
<dbReference type="eggNOG" id="COG3062">
    <property type="taxonomic scope" value="Bacteria"/>
</dbReference>
<dbReference type="HOGENOM" id="CLU_155794_1_0_6"/>
<dbReference type="OrthoDB" id="6455702at2"/>
<dbReference type="PhylomeDB" id="P44651"/>
<dbReference type="BioCyc" id="HINF71421:G1GJ1-359-MONOMER"/>
<dbReference type="Proteomes" id="UP000000579">
    <property type="component" value="Chromosome"/>
</dbReference>
<dbReference type="GO" id="GO:0005737">
    <property type="term" value="C:cytoplasm"/>
    <property type="evidence" value="ECO:0000318"/>
    <property type="project" value="GO_Central"/>
</dbReference>
<dbReference type="GO" id="GO:0005048">
    <property type="term" value="F:signal sequence binding"/>
    <property type="evidence" value="ECO:0007669"/>
    <property type="project" value="UniProtKB-UniRule"/>
</dbReference>
<dbReference type="GO" id="GO:0051224">
    <property type="term" value="P:negative regulation of protein transport"/>
    <property type="evidence" value="ECO:0000318"/>
    <property type="project" value="GO_Central"/>
</dbReference>
<dbReference type="FunFam" id="3.30.70.920:FF:000004">
    <property type="entry name" value="Chaperone NapD"/>
    <property type="match status" value="1"/>
</dbReference>
<dbReference type="Gene3D" id="3.30.70.920">
    <property type="match status" value="1"/>
</dbReference>
<dbReference type="HAMAP" id="MF_02200">
    <property type="entry name" value="NapD"/>
    <property type="match status" value="1"/>
</dbReference>
<dbReference type="InterPro" id="IPR005623">
    <property type="entry name" value="Chaperone_NapD_NO3_reduct"/>
</dbReference>
<dbReference type="PANTHER" id="PTHR38603">
    <property type="entry name" value="CHAPERONE NAPD"/>
    <property type="match status" value="1"/>
</dbReference>
<dbReference type="PANTHER" id="PTHR38603:SF1">
    <property type="entry name" value="CHAPERONE NAPD"/>
    <property type="match status" value="1"/>
</dbReference>
<dbReference type="Pfam" id="PF03927">
    <property type="entry name" value="NapD"/>
    <property type="match status" value="1"/>
</dbReference>
<reference key="1">
    <citation type="journal article" date="1995" name="Science">
        <title>Whole-genome random sequencing and assembly of Haemophilus influenzae Rd.</title>
        <authorList>
            <person name="Fleischmann R.D."/>
            <person name="Adams M.D."/>
            <person name="White O."/>
            <person name="Clayton R.A."/>
            <person name="Kirkness E.F."/>
            <person name="Kerlavage A.R."/>
            <person name="Bult C.J."/>
            <person name="Tomb J.-F."/>
            <person name="Dougherty B.A."/>
            <person name="Merrick J.M."/>
            <person name="McKenney K."/>
            <person name="Sutton G.G."/>
            <person name="FitzHugh W."/>
            <person name="Fields C.A."/>
            <person name="Gocayne J.D."/>
            <person name="Scott J.D."/>
            <person name="Shirley R."/>
            <person name="Liu L.-I."/>
            <person name="Glodek A."/>
            <person name="Kelley J.M."/>
            <person name="Weidman J.F."/>
            <person name="Phillips C.A."/>
            <person name="Spriggs T."/>
            <person name="Hedblom E."/>
            <person name="Cotton M.D."/>
            <person name="Utterback T.R."/>
            <person name="Hanna M.C."/>
            <person name="Nguyen D.T."/>
            <person name="Saudek D.M."/>
            <person name="Brandon R.C."/>
            <person name="Fine L.D."/>
            <person name="Fritchman J.L."/>
            <person name="Fuhrmann J.L."/>
            <person name="Geoghagen N.S.M."/>
            <person name="Gnehm C.L."/>
            <person name="McDonald L.A."/>
            <person name="Small K.V."/>
            <person name="Fraser C.M."/>
            <person name="Smith H.O."/>
            <person name="Venter J.C."/>
        </authorList>
    </citation>
    <scope>NUCLEOTIDE SEQUENCE [LARGE SCALE GENOMIC DNA]</scope>
    <source>
        <strain>ATCC 51907 / DSM 11121 / KW20 / Rd</strain>
    </source>
</reference>
<sequence length="93" mass="10516">MNNTNLILENARDWHVVGLIVQGNPKKLSAIQTALLAIEHTEIPTLDEKLGKFVVVMQSNDQHLLLEKMESVKDIDGVINVSLVYHEQDEQNK</sequence>
<protein>
    <recommendedName>
        <fullName evidence="1">Chaperone NapD</fullName>
    </recommendedName>
    <alternativeName>
        <fullName evidence="1">NapA signal peptide-binding chaperone NapD</fullName>
    </alternativeName>
</protein>
<gene>
    <name evidence="1" type="primary">napD</name>
    <name type="ordered locus">HI_0343</name>
</gene>
<accession>P44651</accession>
<keyword id="KW-0143">Chaperone</keyword>
<keyword id="KW-0963">Cytoplasm</keyword>
<keyword id="KW-1185">Reference proteome</keyword>